<accession>Q9UWX4</accession>
<comment type="function">
    <text evidence="1">Catalyzes the hydrolysis of glutamine to glutamate and ammonia as part of the biosynthesis of pyridoxal 5'-phosphate. The resulting ammonia molecule is channeled to the active site of PdxS.</text>
</comment>
<comment type="catalytic activity">
    <reaction evidence="1">
        <text>aldehydo-D-ribose 5-phosphate + D-glyceraldehyde 3-phosphate + L-glutamine = pyridoxal 5'-phosphate + L-glutamate + phosphate + 3 H2O + H(+)</text>
        <dbReference type="Rhea" id="RHEA:31507"/>
        <dbReference type="ChEBI" id="CHEBI:15377"/>
        <dbReference type="ChEBI" id="CHEBI:15378"/>
        <dbReference type="ChEBI" id="CHEBI:29985"/>
        <dbReference type="ChEBI" id="CHEBI:43474"/>
        <dbReference type="ChEBI" id="CHEBI:58273"/>
        <dbReference type="ChEBI" id="CHEBI:58359"/>
        <dbReference type="ChEBI" id="CHEBI:59776"/>
        <dbReference type="ChEBI" id="CHEBI:597326"/>
        <dbReference type="EC" id="4.3.3.6"/>
    </reaction>
</comment>
<comment type="catalytic activity">
    <reaction evidence="1">
        <text>L-glutamine + H2O = L-glutamate + NH4(+)</text>
        <dbReference type="Rhea" id="RHEA:15889"/>
        <dbReference type="ChEBI" id="CHEBI:15377"/>
        <dbReference type="ChEBI" id="CHEBI:28938"/>
        <dbReference type="ChEBI" id="CHEBI:29985"/>
        <dbReference type="ChEBI" id="CHEBI:58359"/>
        <dbReference type="EC" id="3.5.1.2"/>
    </reaction>
</comment>
<comment type="pathway">
    <text evidence="1">Cofactor biosynthesis; pyridoxal 5'-phosphate biosynthesis.</text>
</comment>
<comment type="subunit">
    <text evidence="1">In the presence of PdxS, forms a dodecamer of heterodimers. Only shows activity in the heterodimer.</text>
</comment>
<comment type="similarity">
    <text evidence="1">Belongs to the glutaminase PdxT/SNO family.</text>
</comment>
<evidence type="ECO:0000255" key="1">
    <source>
        <dbReference type="HAMAP-Rule" id="MF_01615"/>
    </source>
</evidence>
<protein>
    <recommendedName>
        <fullName evidence="1">Pyridoxal 5'-phosphate synthase subunit PdxT</fullName>
        <ecNumber evidence="1">4.3.3.6</ecNumber>
    </recommendedName>
    <alternativeName>
        <fullName evidence="1">Pdx2</fullName>
    </alternativeName>
    <alternativeName>
        <fullName evidence="1">Pyridoxal 5'-phosphate synthase glutaminase subunit</fullName>
        <ecNumber evidence="1">3.5.1.2</ecNumber>
    </alternativeName>
</protein>
<feature type="chain" id="PRO_0000135692" description="Pyridoxal 5'-phosphate synthase subunit PdxT">
    <location>
        <begin position="1"/>
        <end position="200"/>
    </location>
</feature>
<feature type="active site" description="Nucleophile" evidence="1">
    <location>
        <position position="84"/>
    </location>
</feature>
<feature type="active site" description="Charge relay system" evidence="1">
    <location>
        <position position="181"/>
    </location>
</feature>
<feature type="active site" description="Charge relay system" evidence="1">
    <location>
        <position position="183"/>
    </location>
</feature>
<feature type="binding site" evidence="1">
    <location>
        <begin position="52"/>
        <end position="54"/>
    </location>
    <ligand>
        <name>L-glutamine</name>
        <dbReference type="ChEBI" id="CHEBI:58359"/>
    </ligand>
</feature>
<feature type="binding site" evidence="1">
    <location>
        <position position="116"/>
    </location>
    <ligand>
        <name>L-glutamine</name>
        <dbReference type="ChEBI" id="CHEBI:58359"/>
    </ligand>
</feature>
<feature type="binding site" evidence="1">
    <location>
        <begin position="145"/>
        <end position="146"/>
    </location>
    <ligand>
        <name>L-glutamine</name>
        <dbReference type="ChEBI" id="CHEBI:58359"/>
    </ligand>
</feature>
<name>PDXT_SACS2</name>
<keyword id="KW-0315">Glutamine amidotransferase</keyword>
<keyword id="KW-0378">Hydrolase</keyword>
<keyword id="KW-0456">Lyase</keyword>
<keyword id="KW-0663">Pyridoxal phosphate</keyword>
<keyword id="KW-1185">Reference proteome</keyword>
<reference key="1">
    <citation type="journal article" date="2000" name="Genome">
        <title>Gene content and organization of a 281-kbp contig from the genome of the extremely thermophilic archaeon, Sulfolobus solfataricus P2.</title>
        <authorList>
            <person name="Charlebois R.L."/>
            <person name="Singh R.K."/>
            <person name="Chan-Weiher C.C.-Y."/>
            <person name="Allard G."/>
            <person name="Chow C."/>
            <person name="Confalonieri F."/>
            <person name="Curtis B."/>
            <person name="Duguet M."/>
            <person name="Erauso G."/>
            <person name="Faguy D."/>
            <person name="Gaasterland T."/>
            <person name="Garrett R.A."/>
            <person name="Gordon P."/>
            <person name="Jeffries A.C."/>
            <person name="Kozera C."/>
            <person name="Kushwaha N."/>
            <person name="Lafleur E."/>
            <person name="Medina N."/>
            <person name="Peng X."/>
            <person name="Penny S.L."/>
            <person name="She Q."/>
            <person name="St Jean A."/>
            <person name="van der Oost J."/>
            <person name="Young F."/>
            <person name="Zivanovic Y."/>
            <person name="Doolittle W.F."/>
            <person name="Ragan M.A."/>
            <person name="Sensen C.W."/>
        </authorList>
    </citation>
    <scope>NUCLEOTIDE SEQUENCE [LARGE SCALE GENOMIC DNA]</scope>
    <source>
        <strain>ATCC 35092 / DSM 1617 / JCM 11322 / P2</strain>
    </source>
</reference>
<reference key="2">
    <citation type="journal article" date="2001" name="Proc. Natl. Acad. Sci. U.S.A.">
        <title>The complete genome of the crenarchaeon Sulfolobus solfataricus P2.</title>
        <authorList>
            <person name="She Q."/>
            <person name="Singh R.K."/>
            <person name="Confalonieri F."/>
            <person name="Zivanovic Y."/>
            <person name="Allard G."/>
            <person name="Awayez M.J."/>
            <person name="Chan-Weiher C.C.-Y."/>
            <person name="Clausen I.G."/>
            <person name="Curtis B.A."/>
            <person name="De Moors A."/>
            <person name="Erauso G."/>
            <person name="Fletcher C."/>
            <person name="Gordon P.M.K."/>
            <person name="Heikamp-de Jong I."/>
            <person name="Jeffries A.C."/>
            <person name="Kozera C.J."/>
            <person name="Medina N."/>
            <person name="Peng X."/>
            <person name="Thi-Ngoc H.P."/>
            <person name="Redder P."/>
            <person name="Schenk M.E."/>
            <person name="Theriault C."/>
            <person name="Tolstrup N."/>
            <person name="Charlebois R.L."/>
            <person name="Doolittle W.F."/>
            <person name="Duguet M."/>
            <person name="Gaasterland T."/>
            <person name="Garrett R.A."/>
            <person name="Ragan M.A."/>
            <person name="Sensen C.W."/>
            <person name="Van der Oost J."/>
        </authorList>
    </citation>
    <scope>NUCLEOTIDE SEQUENCE [LARGE SCALE GENOMIC DNA]</scope>
    <source>
        <strain>ATCC 35092 / DSM 1617 / JCM 11322 / P2</strain>
    </source>
</reference>
<sequence>MKIGIIAYQGSFEEHFLQLKRAFDKLSLNGEIISIKIPKDLKGVDGVIIPGGESTTIGLVAKRLGLLDELKEKITSGLPVLGTCAGAIMLAKEVSDAKVGKTSQPLIGTMNISVIRNYYGRQKESFEAIVDLSKIGKDKAHVVFIRAPAIAKVWGKAQSLAELNGVTVFAEENNMLATTFHPELSDTTSIHEYFLHLVKG</sequence>
<proteinExistence type="inferred from homology"/>
<organism>
    <name type="scientific">Saccharolobus solfataricus (strain ATCC 35092 / DSM 1617 / JCM 11322 / P2)</name>
    <name type="common">Sulfolobus solfataricus</name>
    <dbReference type="NCBI Taxonomy" id="273057"/>
    <lineage>
        <taxon>Archaea</taxon>
        <taxon>Thermoproteota</taxon>
        <taxon>Thermoprotei</taxon>
        <taxon>Sulfolobales</taxon>
        <taxon>Sulfolobaceae</taxon>
        <taxon>Saccharolobus</taxon>
    </lineage>
</organism>
<gene>
    <name evidence="1" type="primary">pdxT</name>
    <name type="ordered locus">SSO0571</name>
</gene>
<dbReference type="EC" id="4.3.3.6" evidence="1"/>
<dbReference type="EC" id="3.5.1.2" evidence="1"/>
<dbReference type="EMBL" id="Y18930">
    <property type="protein sequence ID" value="CAB57729.1"/>
    <property type="molecule type" value="Genomic_DNA"/>
</dbReference>
<dbReference type="EMBL" id="AE006641">
    <property type="protein sequence ID" value="AAK40887.1"/>
    <property type="molecule type" value="Genomic_DNA"/>
</dbReference>
<dbReference type="PIR" id="H90203">
    <property type="entry name" value="H90203"/>
</dbReference>
<dbReference type="RefSeq" id="WP_009991085.1">
    <property type="nucleotide sequence ID" value="NC_002754.1"/>
</dbReference>
<dbReference type="SMR" id="Q9UWX4"/>
<dbReference type="FunCoup" id="Q9UWX4">
    <property type="interactions" value="119"/>
</dbReference>
<dbReference type="STRING" id="273057.SSO0571"/>
<dbReference type="PaxDb" id="273057-SSO0571"/>
<dbReference type="EnsemblBacteria" id="AAK40887">
    <property type="protein sequence ID" value="AAK40887"/>
    <property type="gene ID" value="SSO0571"/>
</dbReference>
<dbReference type="GeneID" id="44129576"/>
<dbReference type="KEGG" id="sso:SSO0571"/>
<dbReference type="PATRIC" id="fig|273057.12.peg.580"/>
<dbReference type="eggNOG" id="arCOG00034">
    <property type="taxonomic scope" value="Archaea"/>
</dbReference>
<dbReference type="HOGENOM" id="CLU_069674_2_0_2"/>
<dbReference type="InParanoid" id="Q9UWX4"/>
<dbReference type="PhylomeDB" id="Q9UWX4"/>
<dbReference type="UniPathway" id="UPA00245"/>
<dbReference type="Proteomes" id="UP000001974">
    <property type="component" value="Chromosome"/>
</dbReference>
<dbReference type="GO" id="GO:0005829">
    <property type="term" value="C:cytosol"/>
    <property type="evidence" value="ECO:0000318"/>
    <property type="project" value="GO_Central"/>
</dbReference>
<dbReference type="GO" id="GO:1903600">
    <property type="term" value="C:glutaminase complex"/>
    <property type="evidence" value="ECO:0000318"/>
    <property type="project" value="GO_Central"/>
</dbReference>
<dbReference type="GO" id="GO:0004359">
    <property type="term" value="F:glutaminase activity"/>
    <property type="evidence" value="ECO:0007669"/>
    <property type="project" value="UniProtKB-UniRule"/>
</dbReference>
<dbReference type="GO" id="GO:0036381">
    <property type="term" value="F:pyridoxal 5'-phosphate synthase (glutamine hydrolysing) activity"/>
    <property type="evidence" value="ECO:0007669"/>
    <property type="project" value="UniProtKB-UniRule"/>
</dbReference>
<dbReference type="GO" id="GO:0006543">
    <property type="term" value="P:glutamine catabolic process"/>
    <property type="evidence" value="ECO:0007669"/>
    <property type="project" value="UniProtKB-UniRule"/>
</dbReference>
<dbReference type="GO" id="GO:0042823">
    <property type="term" value="P:pyridoxal phosphate biosynthetic process"/>
    <property type="evidence" value="ECO:0000318"/>
    <property type="project" value="GO_Central"/>
</dbReference>
<dbReference type="GO" id="GO:0008614">
    <property type="term" value="P:pyridoxine metabolic process"/>
    <property type="evidence" value="ECO:0000318"/>
    <property type="project" value="GO_Central"/>
</dbReference>
<dbReference type="CDD" id="cd01749">
    <property type="entry name" value="GATase1_PB"/>
    <property type="match status" value="1"/>
</dbReference>
<dbReference type="FunFam" id="3.40.50.880:FF:000041">
    <property type="entry name" value="Glutamine amidotransferase subunit pdxT, putative"/>
    <property type="match status" value="1"/>
</dbReference>
<dbReference type="Gene3D" id="3.40.50.880">
    <property type="match status" value="1"/>
</dbReference>
<dbReference type="HAMAP" id="MF_01615">
    <property type="entry name" value="PdxT"/>
    <property type="match status" value="1"/>
</dbReference>
<dbReference type="InterPro" id="IPR029062">
    <property type="entry name" value="Class_I_gatase-like"/>
</dbReference>
<dbReference type="InterPro" id="IPR002161">
    <property type="entry name" value="PdxT/SNO"/>
</dbReference>
<dbReference type="InterPro" id="IPR021196">
    <property type="entry name" value="PdxT/SNO_CS"/>
</dbReference>
<dbReference type="NCBIfam" id="TIGR03800">
    <property type="entry name" value="PLP_synth_Pdx2"/>
    <property type="match status" value="1"/>
</dbReference>
<dbReference type="PANTHER" id="PTHR31559">
    <property type="entry name" value="PYRIDOXAL 5'-PHOSPHATE SYNTHASE SUBUNIT SNO"/>
    <property type="match status" value="1"/>
</dbReference>
<dbReference type="PANTHER" id="PTHR31559:SF0">
    <property type="entry name" value="PYRIDOXAL 5'-PHOSPHATE SYNTHASE SUBUNIT SNO1-RELATED"/>
    <property type="match status" value="1"/>
</dbReference>
<dbReference type="Pfam" id="PF01174">
    <property type="entry name" value="SNO"/>
    <property type="match status" value="1"/>
</dbReference>
<dbReference type="PIRSF" id="PIRSF005639">
    <property type="entry name" value="Glut_amidoT_SNO"/>
    <property type="match status" value="1"/>
</dbReference>
<dbReference type="SUPFAM" id="SSF52317">
    <property type="entry name" value="Class I glutamine amidotransferase-like"/>
    <property type="match status" value="1"/>
</dbReference>
<dbReference type="PROSITE" id="PS01236">
    <property type="entry name" value="PDXT_SNO_1"/>
    <property type="match status" value="1"/>
</dbReference>
<dbReference type="PROSITE" id="PS51130">
    <property type="entry name" value="PDXT_SNO_2"/>
    <property type="match status" value="1"/>
</dbReference>